<name>HBOH_BURMS</name>
<feature type="signal peptide" evidence="1">
    <location>
        <begin position="1"/>
        <end position="33"/>
    </location>
</feature>
<feature type="chain" id="PRO_0000314418" description="D-(-)-3-hydroxybutyrate oligomer hydrolase">
    <location>
        <begin position="34"/>
        <end position="699"/>
    </location>
</feature>
<feature type="active site" description="Charge relay system" evidence="1">
    <location>
        <position position="311"/>
    </location>
</feature>
<proteinExistence type="inferred from homology"/>
<gene>
    <name type="ordered locus">BMASAVP1_A0886</name>
</gene>
<organism>
    <name type="scientific">Burkholderia mallei (strain SAVP1)</name>
    <dbReference type="NCBI Taxonomy" id="320388"/>
    <lineage>
        <taxon>Bacteria</taxon>
        <taxon>Pseudomonadati</taxon>
        <taxon>Pseudomonadota</taxon>
        <taxon>Betaproteobacteria</taxon>
        <taxon>Burkholderiales</taxon>
        <taxon>Burkholderiaceae</taxon>
        <taxon>Burkholderia</taxon>
        <taxon>pseudomallei group</taxon>
    </lineage>
</organism>
<protein>
    <recommendedName>
        <fullName evidence="1">D-(-)-3-hydroxybutyrate oligomer hydrolase</fullName>
        <shortName evidence="1">3HB-oligomer hydrolase</shortName>
        <shortName evidence="1">3HBOH</shortName>
        <ecNumber evidence="1">3.1.1.22</ecNumber>
    </recommendedName>
</protein>
<keyword id="KW-0378">Hydrolase</keyword>
<keyword id="KW-0964">Secreted</keyword>
<keyword id="KW-0732">Signal</keyword>
<accession>A1V1X3</accession>
<comment type="function">
    <text evidence="1">Participates in the degradation of poly-3-hydroxybutyrate (PHB). It works downstream of poly(3-hydroxybutyrate) depolymerase, hydrolyzing D(-)-3-hydroxybutyrate oligomers of various length (3HB-oligomers) into 3HB-monomers.</text>
</comment>
<comment type="catalytic activity">
    <reaction evidence="1">
        <text>(3R)-hydroxybutanoate dimer + H2O = 2 (R)-3-hydroxybutanoate + H(+)</text>
        <dbReference type="Rhea" id="RHEA:10172"/>
        <dbReference type="ChEBI" id="CHEBI:10979"/>
        <dbReference type="ChEBI" id="CHEBI:10983"/>
        <dbReference type="ChEBI" id="CHEBI:15377"/>
        <dbReference type="ChEBI" id="CHEBI:15378"/>
        <dbReference type="EC" id="3.1.1.22"/>
    </reaction>
</comment>
<comment type="pathway">
    <text evidence="1">Lipid metabolism; butanoate metabolism.</text>
</comment>
<comment type="subcellular location">
    <subcellularLocation>
        <location evidence="1">Secreted</location>
    </subcellularLocation>
</comment>
<comment type="similarity">
    <text evidence="1">Belongs to the D-(-)-3-hydroxybutyrate oligomer hydrolase family.</text>
</comment>
<reference key="1">
    <citation type="journal article" date="2010" name="Genome Biol. Evol.">
        <title>Continuing evolution of Burkholderia mallei through genome reduction and large-scale rearrangements.</title>
        <authorList>
            <person name="Losada L."/>
            <person name="Ronning C.M."/>
            <person name="DeShazer D."/>
            <person name="Woods D."/>
            <person name="Fedorova N."/>
            <person name="Kim H.S."/>
            <person name="Shabalina S.A."/>
            <person name="Pearson T.R."/>
            <person name="Brinkac L."/>
            <person name="Tan P."/>
            <person name="Nandi T."/>
            <person name="Crabtree J."/>
            <person name="Badger J."/>
            <person name="Beckstrom-Sternberg S."/>
            <person name="Saqib M."/>
            <person name="Schutzer S.E."/>
            <person name="Keim P."/>
            <person name="Nierman W.C."/>
        </authorList>
    </citation>
    <scope>NUCLEOTIDE SEQUENCE [LARGE SCALE GENOMIC DNA]</scope>
    <source>
        <strain>SAVP1</strain>
    </source>
</reference>
<sequence>MTAIRGGSRRAPGLALALLGGVLLGACHGDENAQVNALPGFVSGSVRKTAYDGASDDLLTAGLGKTGLGSDTRPGFANPAQPSAAELRCLAIYSNYRALVDITPNGGYGRFWGPNVDLAGNDTLGEGKIAGTEYLAYSDDGSGRKNVTLLVQVPASFDPANPCIVTATASGSRGVYGAIAAAGEWGLKRGCAVAYNDKGGGNGAHEIGTGVVTLIDGTLATASSAGSSSLFTASESSSTLAAFNSAFPNRYAYKHAHSQQNPEQDWGRVTLQAVEFAYWALNEQFGPVVDGTRHGIRYRPGDITTIAASVSNGGGSALAAAEQDTRGWITAVVVGEPQINVRMTPGVTVEQGGAPVPSFGRPLADYATLANLLQPCAAAAVAATGAPYLSALPMGVTQSIRTQRCATLAAAGLVSGADTASQASDALAQLYAAGYLADSDLLQAPMWDSQAMPAIAVTYANAYTRSRVTDNLCNFSFATTNPVTGAVAAPAVSPMTNLFGAGNGVPPTNGINLVFNGASGGVDHRLATPDASFAGAFCLRQLWTANQLGIGTNVDAVRVAANLQHKPAIIVHGRSDALVPVNHASRAYVAQNSATEGRASQLSFYEVTNGQHFDAFLSVPGFDTRFVPVHYYDEQALNLMWNHLKSGAPLPPSQVIRTVPRGGVPGAAPALSTANLPPIVQSPGANAIAVNAGVIDVPL</sequence>
<dbReference type="EC" id="3.1.1.22" evidence="1"/>
<dbReference type="EMBL" id="CP000526">
    <property type="protein sequence ID" value="ABM50068.1"/>
    <property type="molecule type" value="Genomic_DNA"/>
</dbReference>
<dbReference type="RefSeq" id="WP_011807655.1">
    <property type="nucleotide sequence ID" value="NC_008785.1"/>
</dbReference>
<dbReference type="ESTHER" id="burps-hboh">
    <property type="family name" value="OHBut_olig_hydro_put"/>
</dbReference>
<dbReference type="KEGG" id="bmv:BMASAVP1_A0886"/>
<dbReference type="HOGENOM" id="CLU_420258_0_0_4"/>
<dbReference type="UniPathway" id="UPA00863"/>
<dbReference type="GO" id="GO:0005615">
    <property type="term" value="C:extracellular space"/>
    <property type="evidence" value="ECO:0007669"/>
    <property type="project" value="InterPro"/>
</dbReference>
<dbReference type="GO" id="GO:0047989">
    <property type="term" value="F:hydroxybutyrate-dimer hydrolase activity"/>
    <property type="evidence" value="ECO:0007669"/>
    <property type="project" value="UniProtKB-UniRule"/>
</dbReference>
<dbReference type="GO" id="GO:0019605">
    <property type="term" value="P:butyrate metabolic process"/>
    <property type="evidence" value="ECO:0007669"/>
    <property type="project" value="UniProtKB-UniRule"/>
</dbReference>
<dbReference type="HAMAP" id="MF_01906">
    <property type="entry name" value="3HBOH"/>
    <property type="match status" value="1"/>
</dbReference>
<dbReference type="InterPro" id="IPR029058">
    <property type="entry name" value="AB_hydrolase_fold"/>
</dbReference>
<dbReference type="InterPro" id="IPR016582">
    <property type="entry name" value="OHBut_olig_hydro_put"/>
</dbReference>
<dbReference type="Pfam" id="PF10605">
    <property type="entry name" value="3HBOH"/>
    <property type="match status" value="1"/>
</dbReference>
<dbReference type="PIRSF" id="PIRSF011409">
    <property type="entry name" value="HObutyrate_olig_hydrol"/>
    <property type="match status" value="1"/>
</dbReference>
<dbReference type="SUPFAM" id="SSF53474">
    <property type="entry name" value="alpha/beta-Hydrolases"/>
    <property type="match status" value="1"/>
</dbReference>
<evidence type="ECO:0000255" key="1">
    <source>
        <dbReference type="HAMAP-Rule" id="MF_01906"/>
    </source>
</evidence>